<keyword id="KW-0678">Repressor</keyword>
<keyword id="KW-0687">Ribonucleoprotein</keyword>
<keyword id="KW-0689">Ribosomal protein</keyword>
<keyword id="KW-0694">RNA-binding</keyword>
<keyword id="KW-0699">rRNA-binding</keyword>
<keyword id="KW-0810">Translation regulation</keyword>
<keyword id="KW-0820">tRNA-binding</keyword>
<organism>
    <name type="scientific">Actinobacillus pleuropneumoniae serotype 3 (strain JL03)</name>
    <dbReference type="NCBI Taxonomy" id="434271"/>
    <lineage>
        <taxon>Bacteria</taxon>
        <taxon>Pseudomonadati</taxon>
        <taxon>Pseudomonadota</taxon>
        <taxon>Gammaproteobacteria</taxon>
        <taxon>Pasteurellales</taxon>
        <taxon>Pasteurellaceae</taxon>
        <taxon>Actinobacillus</taxon>
    </lineage>
</organism>
<comment type="function">
    <text evidence="1">Binds directly to 23S rRNA. The L1 stalk is quite mobile in the ribosome, and is involved in E site tRNA release.</text>
</comment>
<comment type="function">
    <text evidence="1">Protein L1 is also a translational repressor protein, it controls the translation of the L11 operon by binding to its mRNA.</text>
</comment>
<comment type="subunit">
    <text evidence="1">Part of the 50S ribosomal subunit.</text>
</comment>
<comment type="similarity">
    <text evidence="1">Belongs to the universal ribosomal protein uL1 family.</text>
</comment>
<dbReference type="EMBL" id="CP000687">
    <property type="protein sequence ID" value="ABY70304.1"/>
    <property type="molecule type" value="Genomic_DNA"/>
</dbReference>
<dbReference type="RefSeq" id="WP_012263367.1">
    <property type="nucleotide sequence ID" value="NC_010278.1"/>
</dbReference>
<dbReference type="SMR" id="B0BSE7"/>
<dbReference type="KEGG" id="apj:APJL_1752"/>
<dbReference type="HOGENOM" id="CLU_062853_0_0_6"/>
<dbReference type="Proteomes" id="UP000008547">
    <property type="component" value="Chromosome"/>
</dbReference>
<dbReference type="GO" id="GO:0022625">
    <property type="term" value="C:cytosolic large ribosomal subunit"/>
    <property type="evidence" value="ECO:0007669"/>
    <property type="project" value="TreeGrafter"/>
</dbReference>
<dbReference type="GO" id="GO:0019843">
    <property type="term" value="F:rRNA binding"/>
    <property type="evidence" value="ECO:0007669"/>
    <property type="project" value="UniProtKB-UniRule"/>
</dbReference>
<dbReference type="GO" id="GO:0003735">
    <property type="term" value="F:structural constituent of ribosome"/>
    <property type="evidence" value="ECO:0007669"/>
    <property type="project" value="InterPro"/>
</dbReference>
<dbReference type="GO" id="GO:0000049">
    <property type="term" value="F:tRNA binding"/>
    <property type="evidence" value="ECO:0007669"/>
    <property type="project" value="UniProtKB-KW"/>
</dbReference>
<dbReference type="GO" id="GO:0006417">
    <property type="term" value="P:regulation of translation"/>
    <property type="evidence" value="ECO:0007669"/>
    <property type="project" value="UniProtKB-KW"/>
</dbReference>
<dbReference type="GO" id="GO:0006412">
    <property type="term" value="P:translation"/>
    <property type="evidence" value="ECO:0007669"/>
    <property type="project" value="UniProtKB-UniRule"/>
</dbReference>
<dbReference type="CDD" id="cd00403">
    <property type="entry name" value="Ribosomal_L1"/>
    <property type="match status" value="1"/>
</dbReference>
<dbReference type="FunFam" id="3.40.50.790:FF:000001">
    <property type="entry name" value="50S ribosomal protein L1"/>
    <property type="match status" value="1"/>
</dbReference>
<dbReference type="Gene3D" id="3.30.190.20">
    <property type="match status" value="1"/>
</dbReference>
<dbReference type="Gene3D" id="3.40.50.790">
    <property type="match status" value="1"/>
</dbReference>
<dbReference type="HAMAP" id="MF_01318_B">
    <property type="entry name" value="Ribosomal_uL1_B"/>
    <property type="match status" value="1"/>
</dbReference>
<dbReference type="InterPro" id="IPR005878">
    <property type="entry name" value="Ribosom_uL1_bac-type"/>
</dbReference>
<dbReference type="InterPro" id="IPR002143">
    <property type="entry name" value="Ribosomal_uL1"/>
</dbReference>
<dbReference type="InterPro" id="IPR023674">
    <property type="entry name" value="Ribosomal_uL1-like"/>
</dbReference>
<dbReference type="InterPro" id="IPR028364">
    <property type="entry name" value="Ribosomal_uL1/biogenesis"/>
</dbReference>
<dbReference type="InterPro" id="IPR016095">
    <property type="entry name" value="Ribosomal_uL1_3-a/b-sand"/>
</dbReference>
<dbReference type="InterPro" id="IPR023673">
    <property type="entry name" value="Ribosomal_uL1_CS"/>
</dbReference>
<dbReference type="NCBIfam" id="TIGR01169">
    <property type="entry name" value="rplA_bact"/>
    <property type="match status" value="1"/>
</dbReference>
<dbReference type="PANTHER" id="PTHR36427">
    <property type="entry name" value="54S RIBOSOMAL PROTEIN L1, MITOCHONDRIAL"/>
    <property type="match status" value="1"/>
</dbReference>
<dbReference type="PANTHER" id="PTHR36427:SF3">
    <property type="entry name" value="LARGE RIBOSOMAL SUBUNIT PROTEIN UL1M"/>
    <property type="match status" value="1"/>
</dbReference>
<dbReference type="Pfam" id="PF00687">
    <property type="entry name" value="Ribosomal_L1"/>
    <property type="match status" value="1"/>
</dbReference>
<dbReference type="PIRSF" id="PIRSF002155">
    <property type="entry name" value="Ribosomal_L1"/>
    <property type="match status" value="1"/>
</dbReference>
<dbReference type="SUPFAM" id="SSF56808">
    <property type="entry name" value="Ribosomal protein L1"/>
    <property type="match status" value="1"/>
</dbReference>
<dbReference type="PROSITE" id="PS01199">
    <property type="entry name" value="RIBOSOMAL_L1"/>
    <property type="match status" value="1"/>
</dbReference>
<feature type="chain" id="PRO_1000141351" description="Large ribosomal subunit protein uL1">
    <location>
        <begin position="1"/>
        <end position="229"/>
    </location>
</feature>
<proteinExistence type="inferred from homology"/>
<accession>B0BSE7</accession>
<reference key="1">
    <citation type="journal article" date="2008" name="PLoS ONE">
        <title>Genome biology of Actinobacillus pleuropneumoniae JL03, an isolate of serotype 3 prevalent in China.</title>
        <authorList>
            <person name="Xu Z."/>
            <person name="Zhou Y."/>
            <person name="Li L."/>
            <person name="Zhou R."/>
            <person name="Xiao S."/>
            <person name="Wan Y."/>
            <person name="Zhang S."/>
            <person name="Wang K."/>
            <person name="Li W."/>
            <person name="Li L."/>
            <person name="Jin H."/>
            <person name="Kang M."/>
            <person name="Dalai B."/>
            <person name="Li T."/>
            <person name="Liu L."/>
            <person name="Cheng Y."/>
            <person name="Zhang L."/>
            <person name="Xu T."/>
            <person name="Zheng H."/>
            <person name="Pu S."/>
            <person name="Wang B."/>
            <person name="Gu W."/>
            <person name="Zhang X.L."/>
            <person name="Zhu G.-F."/>
            <person name="Wang S."/>
            <person name="Zhao G.-P."/>
            <person name="Chen H."/>
        </authorList>
    </citation>
    <scope>NUCLEOTIDE SEQUENCE [LARGE SCALE GENOMIC DNA]</scope>
    <source>
        <strain>JL03</strain>
    </source>
</reference>
<gene>
    <name evidence="1" type="primary">rplA</name>
    <name type="ordered locus">APJL_1752</name>
</gene>
<sequence length="229" mass="24020">MAKLTKKMKAIKAGVDSTKAYEINEAIAVLKQFATAKFVESVDVAVNLGIDPRKSHQNVRGATVLPHGTGRTARVAVFTQGENAEAAKAPGADLVGMEDLAEQIKKGEKNFDVVIPSPDAMRVVGQLGQVLGPRGLIPNLKVGTVTPNVVEAVKNAKSGQIRPRNAKNGIIHTTIGKADFAPEQLKDNLVALLAALNKAKPTTVKGIFIKKVSISTTMGAGVAVDQASL</sequence>
<name>RL1_ACTPJ</name>
<protein>
    <recommendedName>
        <fullName evidence="1">Large ribosomal subunit protein uL1</fullName>
    </recommendedName>
    <alternativeName>
        <fullName evidence="2">50S ribosomal protein L1</fullName>
    </alternativeName>
</protein>
<evidence type="ECO:0000255" key="1">
    <source>
        <dbReference type="HAMAP-Rule" id="MF_01318"/>
    </source>
</evidence>
<evidence type="ECO:0000305" key="2"/>